<evidence type="ECO:0000255" key="1">
    <source>
        <dbReference type="HAMAP-Rule" id="MF_00097"/>
    </source>
</evidence>
<gene>
    <name evidence="1" type="primary">thiE</name>
    <name type="ordered locus">PD_1687</name>
</gene>
<feature type="chain" id="PRO_0000157065" description="Thiamine-phosphate synthase">
    <location>
        <begin position="1"/>
        <end position="234"/>
    </location>
</feature>
<feature type="binding site" evidence="1">
    <location>
        <begin position="65"/>
        <end position="69"/>
    </location>
    <ligand>
        <name>4-amino-2-methyl-5-(diphosphooxymethyl)pyrimidine</name>
        <dbReference type="ChEBI" id="CHEBI:57841"/>
    </ligand>
</feature>
<feature type="binding site" evidence="1">
    <location>
        <position position="97"/>
    </location>
    <ligand>
        <name>4-amino-2-methyl-5-(diphosphooxymethyl)pyrimidine</name>
        <dbReference type="ChEBI" id="CHEBI:57841"/>
    </ligand>
</feature>
<feature type="binding site" evidence="1">
    <location>
        <position position="98"/>
    </location>
    <ligand>
        <name>Mg(2+)</name>
        <dbReference type="ChEBI" id="CHEBI:18420"/>
    </ligand>
</feature>
<feature type="binding site" evidence="1">
    <location>
        <position position="117"/>
    </location>
    <ligand>
        <name>Mg(2+)</name>
        <dbReference type="ChEBI" id="CHEBI:18420"/>
    </ligand>
</feature>
<feature type="binding site" evidence="1">
    <location>
        <position position="136"/>
    </location>
    <ligand>
        <name>4-amino-2-methyl-5-(diphosphooxymethyl)pyrimidine</name>
        <dbReference type="ChEBI" id="CHEBI:57841"/>
    </ligand>
</feature>
<feature type="binding site" evidence="1">
    <location>
        <begin position="163"/>
        <end position="165"/>
    </location>
    <ligand>
        <name>2-[(2R,5Z)-2-carboxy-4-methylthiazol-5(2H)-ylidene]ethyl phosphate</name>
        <dbReference type="ChEBI" id="CHEBI:62899"/>
    </ligand>
</feature>
<feature type="binding site" evidence="1">
    <location>
        <position position="166"/>
    </location>
    <ligand>
        <name>4-amino-2-methyl-5-(diphosphooxymethyl)pyrimidine</name>
        <dbReference type="ChEBI" id="CHEBI:57841"/>
    </ligand>
</feature>
<feature type="binding site" evidence="1">
    <location>
        <position position="192"/>
    </location>
    <ligand>
        <name>2-[(2R,5Z)-2-carboxy-4-methylthiazol-5(2H)-ylidene]ethyl phosphate</name>
        <dbReference type="ChEBI" id="CHEBI:62899"/>
    </ligand>
</feature>
<feature type="binding site" evidence="1">
    <location>
        <begin position="212"/>
        <end position="213"/>
    </location>
    <ligand>
        <name>2-[(2R,5Z)-2-carboxy-4-methylthiazol-5(2H)-ylidene]ethyl phosphate</name>
        <dbReference type="ChEBI" id="CHEBI:62899"/>
    </ligand>
</feature>
<proteinExistence type="inferred from homology"/>
<comment type="function">
    <text evidence="1">Condenses 4-methyl-5-(beta-hydroxyethyl)thiazole monophosphate (THZ-P) and 2-methyl-4-amino-5-hydroxymethyl pyrimidine pyrophosphate (HMP-PP) to form thiamine monophosphate (TMP).</text>
</comment>
<comment type="catalytic activity">
    <reaction evidence="1">
        <text>2-[(2R,5Z)-2-carboxy-4-methylthiazol-5(2H)-ylidene]ethyl phosphate + 4-amino-2-methyl-5-(diphosphooxymethyl)pyrimidine + 2 H(+) = thiamine phosphate + CO2 + diphosphate</text>
        <dbReference type="Rhea" id="RHEA:47844"/>
        <dbReference type="ChEBI" id="CHEBI:15378"/>
        <dbReference type="ChEBI" id="CHEBI:16526"/>
        <dbReference type="ChEBI" id="CHEBI:33019"/>
        <dbReference type="ChEBI" id="CHEBI:37575"/>
        <dbReference type="ChEBI" id="CHEBI:57841"/>
        <dbReference type="ChEBI" id="CHEBI:62899"/>
        <dbReference type="EC" id="2.5.1.3"/>
    </reaction>
</comment>
<comment type="catalytic activity">
    <reaction evidence="1">
        <text>2-(2-carboxy-4-methylthiazol-5-yl)ethyl phosphate + 4-amino-2-methyl-5-(diphosphooxymethyl)pyrimidine + 2 H(+) = thiamine phosphate + CO2 + diphosphate</text>
        <dbReference type="Rhea" id="RHEA:47848"/>
        <dbReference type="ChEBI" id="CHEBI:15378"/>
        <dbReference type="ChEBI" id="CHEBI:16526"/>
        <dbReference type="ChEBI" id="CHEBI:33019"/>
        <dbReference type="ChEBI" id="CHEBI:37575"/>
        <dbReference type="ChEBI" id="CHEBI:57841"/>
        <dbReference type="ChEBI" id="CHEBI:62890"/>
        <dbReference type="EC" id="2.5.1.3"/>
    </reaction>
</comment>
<comment type="catalytic activity">
    <reaction evidence="1">
        <text>4-methyl-5-(2-phosphooxyethyl)-thiazole + 4-amino-2-methyl-5-(diphosphooxymethyl)pyrimidine + H(+) = thiamine phosphate + diphosphate</text>
        <dbReference type="Rhea" id="RHEA:22328"/>
        <dbReference type="ChEBI" id="CHEBI:15378"/>
        <dbReference type="ChEBI" id="CHEBI:33019"/>
        <dbReference type="ChEBI" id="CHEBI:37575"/>
        <dbReference type="ChEBI" id="CHEBI:57841"/>
        <dbReference type="ChEBI" id="CHEBI:58296"/>
        <dbReference type="EC" id="2.5.1.3"/>
    </reaction>
</comment>
<comment type="cofactor">
    <cofactor evidence="1">
        <name>Mg(2+)</name>
        <dbReference type="ChEBI" id="CHEBI:18420"/>
    </cofactor>
    <text evidence="1">Binds 1 Mg(2+) ion per subunit.</text>
</comment>
<comment type="pathway">
    <text evidence="1">Cofactor biosynthesis; thiamine diphosphate biosynthesis; thiamine phosphate from 4-amino-2-methyl-5-diphosphomethylpyrimidine and 4-methyl-5-(2-phosphoethyl)-thiazole: step 1/1.</text>
</comment>
<comment type="similarity">
    <text evidence="1">Belongs to the thiamine-phosphate synthase family.</text>
</comment>
<keyword id="KW-0460">Magnesium</keyword>
<keyword id="KW-0479">Metal-binding</keyword>
<keyword id="KW-1185">Reference proteome</keyword>
<keyword id="KW-0784">Thiamine biosynthesis</keyword>
<keyword id="KW-0808">Transferase</keyword>
<accession>Q87AX6</accession>
<organism>
    <name type="scientific">Xylella fastidiosa (strain Temecula1 / ATCC 700964)</name>
    <dbReference type="NCBI Taxonomy" id="183190"/>
    <lineage>
        <taxon>Bacteria</taxon>
        <taxon>Pseudomonadati</taxon>
        <taxon>Pseudomonadota</taxon>
        <taxon>Gammaproteobacteria</taxon>
        <taxon>Lysobacterales</taxon>
        <taxon>Lysobacteraceae</taxon>
        <taxon>Xylella</taxon>
    </lineage>
</organism>
<dbReference type="EC" id="2.5.1.3" evidence="1"/>
<dbReference type="EMBL" id="AE009442">
    <property type="protein sequence ID" value="AAO29525.1"/>
    <property type="molecule type" value="Genomic_DNA"/>
</dbReference>
<dbReference type="SMR" id="Q87AX6"/>
<dbReference type="KEGG" id="xft:PD_1687"/>
<dbReference type="HOGENOM" id="CLU_018272_3_1_6"/>
<dbReference type="UniPathway" id="UPA00060">
    <property type="reaction ID" value="UER00141"/>
</dbReference>
<dbReference type="Proteomes" id="UP000002516">
    <property type="component" value="Chromosome"/>
</dbReference>
<dbReference type="GO" id="GO:0005737">
    <property type="term" value="C:cytoplasm"/>
    <property type="evidence" value="ECO:0007669"/>
    <property type="project" value="TreeGrafter"/>
</dbReference>
<dbReference type="GO" id="GO:0000287">
    <property type="term" value="F:magnesium ion binding"/>
    <property type="evidence" value="ECO:0007669"/>
    <property type="project" value="UniProtKB-UniRule"/>
</dbReference>
<dbReference type="GO" id="GO:0004789">
    <property type="term" value="F:thiamine-phosphate diphosphorylase activity"/>
    <property type="evidence" value="ECO:0007669"/>
    <property type="project" value="UniProtKB-UniRule"/>
</dbReference>
<dbReference type="GO" id="GO:0009228">
    <property type="term" value="P:thiamine biosynthetic process"/>
    <property type="evidence" value="ECO:0007669"/>
    <property type="project" value="UniProtKB-KW"/>
</dbReference>
<dbReference type="GO" id="GO:0009229">
    <property type="term" value="P:thiamine diphosphate biosynthetic process"/>
    <property type="evidence" value="ECO:0007669"/>
    <property type="project" value="UniProtKB-UniRule"/>
</dbReference>
<dbReference type="CDD" id="cd00564">
    <property type="entry name" value="TMP_TenI"/>
    <property type="match status" value="1"/>
</dbReference>
<dbReference type="Gene3D" id="3.20.20.70">
    <property type="entry name" value="Aldolase class I"/>
    <property type="match status" value="1"/>
</dbReference>
<dbReference type="HAMAP" id="MF_00097">
    <property type="entry name" value="TMP_synthase"/>
    <property type="match status" value="1"/>
</dbReference>
<dbReference type="InterPro" id="IPR013785">
    <property type="entry name" value="Aldolase_TIM"/>
</dbReference>
<dbReference type="InterPro" id="IPR036206">
    <property type="entry name" value="ThiamineP_synth_sf"/>
</dbReference>
<dbReference type="InterPro" id="IPR022998">
    <property type="entry name" value="ThiamineP_synth_TenI"/>
</dbReference>
<dbReference type="InterPro" id="IPR034291">
    <property type="entry name" value="TMP_synthase"/>
</dbReference>
<dbReference type="NCBIfam" id="TIGR00693">
    <property type="entry name" value="thiE"/>
    <property type="match status" value="1"/>
</dbReference>
<dbReference type="PANTHER" id="PTHR20857">
    <property type="entry name" value="THIAMINE-PHOSPHATE PYROPHOSPHORYLASE"/>
    <property type="match status" value="1"/>
</dbReference>
<dbReference type="PANTHER" id="PTHR20857:SF15">
    <property type="entry name" value="THIAMINE-PHOSPHATE SYNTHASE"/>
    <property type="match status" value="1"/>
</dbReference>
<dbReference type="Pfam" id="PF02581">
    <property type="entry name" value="TMP-TENI"/>
    <property type="match status" value="1"/>
</dbReference>
<dbReference type="SUPFAM" id="SSF51391">
    <property type="entry name" value="Thiamin phosphate synthase"/>
    <property type="match status" value="1"/>
</dbReference>
<reference key="1">
    <citation type="journal article" date="2003" name="J. Bacteriol.">
        <title>Comparative analyses of the complete genome sequences of Pierce's disease and citrus variegated chlorosis strains of Xylella fastidiosa.</title>
        <authorList>
            <person name="Van Sluys M.A."/>
            <person name="de Oliveira M.C."/>
            <person name="Monteiro-Vitorello C.B."/>
            <person name="Miyaki C.Y."/>
            <person name="Furlan L.R."/>
            <person name="Camargo L.E.A."/>
            <person name="da Silva A.C.R."/>
            <person name="Moon D.H."/>
            <person name="Takita M.A."/>
            <person name="Lemos E.G.M."/>
            <person name="Machado M.A."/>
            <person name="Ferro M.I.T."/>
            <person name="da Silva F.R."/>
            <person name="Goldman M.H.S."/>
            <person name="Goldman G.H."/>
            <person name="Lemos M.V.F."/>
            <person name="El-Dorry H."/>
            <person name="Tsai S.M."/>
            <person name="Carrer H."/>
            <person name="Carraro D.M."/>
            <person name="de Oliveira R.C."/>
            <person name="Nunes L.R."/>
            <person name="Siqueira W.J."/>
            <person name="Coutinho L.L."/>
            <person name="Kimura E.T."/>
            <person name="Ferro E.S."/>
            <person name="Harakava R."/>
            <person name="Kuramae E.E."/>
            <person name="Marino C.L."/>
            <person name="Giglioti E."/>
            <person name="Abreu I.L."/>
            <person name="Alves L.M.C."/>
            <person name="do Amaral A.M."/>
            <person name="Baia G.S."/>
            <person name="Blanco S.R."/>
            <person name="Brito M.S."/>
            <person name="Cannavan F.S."/>
            <person name="Celestino A.V."/>
            <person name="da Cunha A.F."/>
            <person name="Fenille R.C."/>
            <person name="Ferro J.A."/>
            <person name="Formighieri E.F."/>
            <person name="Kishi L.T."/>
            <person name="Leoni S.G."/>
            <person name="Oliveira A.R."/>
            <person name="Rosa V.E. Jr."/>
            <person name="Sassaki F.T."/>
            <person name="Sena J.A.D."/>
            <person name="de Souza A.A."/>
            <person name="Truffi D."/>
            <person name="Tsukumo F."/>
            <person name="Yanai G.M."/>
            <person name="Zaros L.G."/>
            <person name="Civerolo E.L."/>
            <person name="Simpson A.J.G."/>
            <person name="Almeida N.F. Jr."/>
            <person name="Setubal J.C."/>
            <person name="Kitajima J.P."/>
        </authorList>
    </citation>
    <scope>NUCLEOTIDE SEQUENCE [LARGE SCALE GENOMIC DNA]</scope>
    <source>
        <strain>Temecula1 / ATCC 700964</strain>
    </source>
</reference>
<protein>
    <recommendedName>
        <fullName evidence="1">Thiamine-phosphate synthase</fullName>
        <shortName evidence="1">TP synthase</shortName>
        <shortName evidence="1">TPS</shortName>
        <ecNumber evidence="1">2.5.1.3</ecNumber>
    </recommendedName>
    <alternativeName>
        <fullName evidence="1">Thiamine-phosphate pyrophosphorylase</fullName>
        <shortName evidence="1">TMP pyrophosphorylase</shortName>
        <shortName evidence="1">TMP-PPase</shortName>
    </alternativeName>
</protein>
<sequence>MEVSSIGSFQEHIDKTTDIVTLHPLLRNPIMPQPRGIYLITPDETDTARLIAHTAPLLNGIVWLQYRNKLANTALRTEQAQALLALCRPTGIPLLINDDLELAQTIGADGVHLGMHDSNASIARAQLGPHAIIGVSCYNQIERAKQAIKAGASYVGFGAFYPSHTKTTPYRATPELLRQTTHLGVPRVAIGGLTPKNIAPIIEAGAELLAVISGIYSAKNPITALKAYQSQFNI</sequence>
<name>THIE_XYLFT</name>